<protein>
    <recommendedName>
        <fullName evidence="5">Periviscerokinin-2</fullName>
        <shortName evidence="5">Entsp-PVK-2</shortName>
    </recommendedName>
</protein>
<sequence>GASGLISFPRV</sequence>
<name>PVK2_ENTSB</name>
<dbReference type="GO" id="GO:0005576">
    <property type="term" value="C:extracellular region"/>
    <property type="evidence" value="ECO:0007669"/>
    <property type="project" value="UniProtKB-SubCell"/>
</dbReference>
<dbReference type="GO" id="GO:0007218">
    <property type="term" value="P:neuropeptide signaling pathway"/>
    <property type="evidence" value="ECO:0007669"/>
    <property type="project" value="UniProtKB-KW"/>
</dbReference>
<dbReference type="InterPro" id="IPR013231">
    <property type="entry name" value="Periviscerokinin"/>
</dbReference>
<dbReference type="Pfam" id="PF08259">
    <property type="entry name" value="Periviscerokin"/>
    <property type="match status" value="1"/>
</dbReference>
<reference evidence="6" key="1">
    <citation type="journal article" date="2010" name="Peptides">
        <title>CAPA-peptides of praying mantids (Mantodea).</title>
        <authorList>
            <person name="Koehler R."/>
            <person name="Predel R."/>
        </authorList>
    </citation>
    <scope>PROTEIN SEQUENCE</scope>
    <scope>MASS SPECTROMETRY</scope>
    <scope>AMIDATION AT VAL-11</scope>
    <source>
        <tissue evidence="4">Abdominal perisympathetic organs</tissue>
    </source>
</reference>
<accession>P86650</accession>
<proteinExistence type="evidence at protein level"/>
<feature type="peptide" id="PRO_0000395584" description="Periviscerokinin-2" evidence="4">
    <location>
        <begin position="1"/>
        <end position="11"/>
    </location>
</feature>
<feature type="modified residue" description="Valine amide" evidence="4">
    <location>
        <position position="11"/>
    </location>
</feature>
<feature type="unsure residue" description="L or I" evidence="4">
    <location>
        <position position="5"/>
    </location>
</feature>
<feature type="unsure residue" description="I or L" evidence="4">
    <location>
        <position position="6"/>
    </location>
</feature>
<organism>
    <name type="scientific">Entella sp. (strain Beaufort-W)</name>
    <name type="common">Praying mantis</name>
    <dbReference type="NCBI Taxonomy" id="761655"/>
    <lineage>
        <taxon>Eukaryota</taxon>
        <taxon>Metazoa</taxon>
        <taxon>Ecdysozoa</taxon>
        <taxon>Arthropoda</taxon>
        <taxon>Hexapoda</taxon>
        <taxon>Insecta</taxon>
        <taxon>Pterygota</taxon>
        <taxon>Neoptera</taxon>
        <taxon>Polyneoptera</taxon>
        <taxon>Dictyoptera</taxon>
        <taxon>Mantodea</taxon>
        <taxon>Eumantodea</taxon>
        <taxon>Chroicopteroidea</taxon>
        <taxon>Chroicopteridae</taxon>
        <taxon>Chroicopterinae</taxon>
        <taxon>Entella</taxon>
    </lineage>
</organism>
<keyword id="KW-0027">Amidation</keyword>
<keyword id="KW-0903">Direct protein sequencing</keyword>
<keyword id="KW-0527">Neuropeptide</keyword>
<keyword id="KW-0964">Secreted</keyword>
<evidence type="ECO:0000250" key="1">
    <source>
        <dbReference type="UniProtKB" id="P83923"/>
    </source>
</evidence>
<evidence type="ECO:0000250" key="2">
    <source>
        <dbReference type="UniProtKB" id="P84375"/>
    </source>
</evidence>
<evidence type="ECO:0000255" key="3"/>
<evidence type="ECO:0000269" key="4">
    <source>
    </source>
</evidence>
<evidence type="ECO:0000303" key="5">
    <source>
    </source>
</evidence>
<evidence type="ECO:0000305" key="6"/>
<comment type="function">
    <text evidence="1">Mediates visceral muscle contractile activity (myotropic activity).</text>
</comment>
<comment type="subcellular location">
    <subcellularLocation>
        <location evidence="2">Secreted</location>
    </subcellularLocation>
</comment>
<comment type="mass spectrometry"/>
<comment type="similarity">
    <text evidence="3">Belongs to the periviscerokinin family.</text>
</comment>